<evidence type="ECO:0000250" key="1"/>
<evidence type="ECO:0000250" key="2">
    <source>
        <dbReference type="UniProtKB" id="Q15047"/>
    </source>
</evidence>
<evidence type="ECO:0000255" key="3"/>
<evidence type="ECO:0000255" key="4">
    <source>
        <dbReference type="PROSITE-ProRule" id="PRU00155"/>
    </source>
</evidence>
<evidence type="ECO:0000255" key="5">
    <source>
        <dbReference type="PROSITE-ProRule" id="PRU00157"/>
    </source>
</evidence>
<evidence type="ECO:0000255" key="6">
    <source>
        <dbReference type="PROSITE-ProRule" id="PRU00190"/>
    </source>
</evidence>
<evidence type="ECO:0000255" key="7">
    <source>
        <dbReference type="PROSITE-ProRule" id="PRU00338"/>
    </source>
</evidence>
<evidence type="ECO:0000255" key="8">
    <source>
        <dbReference type="PROSITE-ProRule" id="PRU00906"/>
    </source>
</evidence>
<evidence type="ECO:0000256" key="9">
    <source>
        <dbReference type="SAM" id="MobiDB-lite"/>
    </source>
</evidence>
<evidence type="ECO:0000269" key="10">
    <source>
    </source>
</evidence>
<evidence type="ECO:0000269" key="11">
    <source>
    </source>
</evidence>
<evidence type="ECO:0000269" key="12">
    <source>
    </source>
</evidence>
<evidence type="ECO:0000269" key="13">
    <source>
    </source>
</evidence>
<evidence type="ECO:0000269" key="14">
    <source>
    </source>
</evidence>
<evidence type="ECO:0000269" key="15">
    <source>
    </source>
</evidence>
<evidence type="ECO:0000269" key="16">
    <source>
    </source>
</evidence>
<evidence type="ECO:0000269" key="17">
    <source>
    </source>
</evidence>
<evidence type="ECO:0000269" key="18">
    <source>
    </source>
</evidence>
<evidence type="ECO:0000303" key="19">
    <source>
    </source>
</evidence>
<evidence type="ECO:0000303" key="20">
    <source>
    </source>
</evidence>
<evidence type="ECO:0000303" key="21">
    <source>
    </source>
</evidence>
<evidence type="ECO:0000303" key="22">
    <source>
    </source>
</evidence>
<evidence type="ECO:0000303" key="23">
    <source>
    </source>
</evidence>
<evidence type="ECO:0000303" key="24">
    <source>
    </source>
</evidence>
<evidence type="ECO:0000305" key="25"/>
<evidence type="ECO:0000312" key="26">
    <source>
        <dbReference type="MGI" id="MGI:1934229"/>
    </source>
</evidence>
<evidence type="ECO:0007744" key="27">
    <source>
    </source>
</evidence>
<dbReference type="EC" id="2.1.1.366" evidence="10 14"/>
<dbReference type="EMBL" id="AF091628">
    <property type="protein sequence ID" value="AAC43039.1"/>
    <property type="molecule type" value="mRNA"/>
</dbReference>
<dbReference type="EMBL" id="AY091600">
    <property type="protein sequence ID" value="AAM13922.1"/>
    <property type="molecule type" value="mRNA"/>
</dbReference>
<dbReference type="EMBL" id="AF546078">
    <property type="protein sequence ID" value="AAN52358.1"/>
    <property type="molecule type" value="mRNA"/>
</dbReference>
<dbReference type="EMBL" id="AY226577">
    <property type="protein sequence ID" value="AAO73535.2"/>
    <property type="molecule type" value="Genomic_DNA"/>
</dbReference>
<dbReference type="EMBL" id="AY226577">
    <property type="protein sequence ID" value="AAO73536.2"/>
    <property type="molecule type" value="Genomic_DNA"/>
</dbReference>
<dbReference type="EMBL" id="BC007176">
    <property type="protein sequence ID" value="AAH07176.1"/>
    <property type="molecule type" value="mRNA"/>
</dbReference>
<dbReference type="EMBL" id="BC079537">
    <property type="protein sequence ID" value="AAH79537.1"/>
    <property type="molecule type" value="mRNA"/>
</dbReference>
<dbReference type="EMBL" id="AK122198">
    <property type="protein sequence ID" value="BAC65480.3"/>
    <property type="molecule type" value="Transcribed_RNA"/>
</dbReference>
<dbReference type="EMBL" id="AK088590">
    <property type="protein sequence ID" value="BAC40439.1"/>
    <property type="molecule type" value="mRNA"/>
</dbReference>
<dbReference type="CCDS" id="CCDS17613.1">
    <molecule id="O88974-4"/>
</dbReference>
<dbReference type="CCDS" id="CCDS50991.1">
    <molecule id="O88974-1"/>
</dbReference>
<dbReference type="PIR" id="T17453">
    <property type="entry name" value="T17453"/>
</dbReference>
<dbReference type="SMR" id="O88974"/>
<dbReference type="FunCoup" id="O88974">
    <property type="interactions" value="4739"/>
</dbReference>
<dbReference type="IntAct" id="O88974">
    <property type="interactions" value="10"/>
</dbReference>
<dbReference type="STRING" id="10090.ENSMUSP00000015841"/>
<dbReference type="GlyGen" id="O88974">
    <property type="glycosylation" value="3 sites, 1 O-linked glycan (2 sites)"/>
</dbReference>
<dbReference type="iPTMnet" id="O88974"/>
<dbReference type="PhosphoSitePlus" id="O88974"/>
<dbReference type="PaxDb" id="10090-ENSMUSP00000015841"/>
<dbReference type="PeptideAtlas" id="O88974"/>
<dbReference type="ProteomicsDB" id="261162">
    <molecule id="O88974-1"/>
</dbReference>
<dbReference type="ProteomicsDB" id="261163">
    <molecule id="O88974-2"/>
</dbReference>
<dbReference type="ProteomicsDB" id="261164">
    <molecule id="O88974-3"/>
</dbReference>
<dbReference type="ProteomicsDB" id="261165">
    <molecule id="O88974-4"/>
</dbReference>
<dbReference type="ProteomicsDB" id="261166">
    <molecule id="O88974-5"/>
</dbReference>
<dbReference type="ProteomicsDB" id="261167">
    <molecule id="O88974-6"/>
</dbReference>
<dbReference type="ProteomicsDB" id="261168">
    <molecule id="O88974-7"/>
</dbReference>
<dbReference type="Pumba" id="O88974"/>
<dbReference type="UCSC" id="uc008qjo.2">
    <molecule id="O88974-5"/>
    <property type="organism name" value="mouse"/>
</dbReference>
<dbReference type="AGR" id="MGI:1934229"/>
<dbReference type="MGI" id="MGI:1934229">
    <property type="gene designation" value="Setdb1"/>
</dbReference>
<dbReference type="eggNOG" id="KOG1141">
    <property type="taxonomic scope" value="Eukaryota"/>
</dbReference>
<dbReference type="InParanoid" id="O88974"/>
<dbReference type="BRENDA" id="2.1.1.366">
    <property type="organism ID" value="3474"/>
</dbReference>
<dbReference type="Reactome" id="R-MMU-3214841">
    <property type="pathway name" value="PKMTs methylate histone lysines"/>
</dbReference>
<dbReference type="Reactome" id="R-MMU-9843940">
    <property type="pathway name" value="Regulation of endogenous retroelements by KRAB-ZFP proteins"/>
</dbReference>
<dbReference type="ChiTaRS" id="Setdb1">
    <property type="organism name" value="mouse"/>
</dbReference>
<dbReference type="PRO" id="PR:O88974"/>
<dbReference type="Proteomes" id="UP000000589">
    <property type="component" value="Unplaced"/>
</dbReference>
<dbReference type="RNAct" id="O88974">
    <property type="molecule type" value="protein"/>
</dbReference>
<dbReference type="GO" id="GO:0005694">
    <property type="term" value="C:chromosome"/>
    <property type="evidence" value="ECO:0007669"/>
    <property type="project" value="UniProtKB-SubCell"/>
</dbReference>
<dbReference type="GO" id="GO:0005737">
    <property type="term" value="C:cytoplasm"/>
    <property type="evidence" value="ECO:0000250"/>
    <property type="project" value="UniProtKB"/>
</dbReference>
<dbReference type="GO" id="GO:0005634">
    <property type="term" value="C:nucleus"/>
    <property type="evidence" value="ECO:0000314"/>
    <property type="project" value="MGI"/>
</dbReference>
<dbReference type="GO" id="GO:0003682">
    <property type="term" value="F:chromatin binding"/>
    <property type="evidence" value="ECO:0000314"/>
    <property type="project" value="MGI"/>
</dbReference>
<dbReference type="GO" id="GO:0003677">
    <property type="term" value="F:DNA binding"/>
    <property type="evidence" value="ECO:0000314"/>
    <property type="project" value="MGI"/>
</dbReference>
<dbReference type="GO" id="GO:0046974">
    <property type="term" value="F:histone H3K9 methyltransferase activity"/>
    <property type="evidence" value="ECO:0000314"/>
    <property type="project" value="UniProtKB"/>
</dbReference>
<dbReference type="GO" id="GO:0140948">
    <property type="term" value="F:histone H3K9 monomethyltransferase activity"/>
    <property type="evidence" value="ECO:0007669"/>
    <property type="project" value="RHEA"/>
</dbReference>
<dbReference type="GO" id="GO:0140947">
    <property type="term" value="F:histone H3K9me2 methyltransferase activity"/>
    <property type="evidence" value="ECO:0007669"/>
    <property type="project" value="UniProtKB-EC"/>
</dbReference>
<dbReference type="GO" id="GO:1990841">
    <property type="term" value="F:promoter-specific chromatin binding"/>
    <property type="evidence" value="ECO:0000314"/>
    <property type="project" value="UniProtKB"/>
</dbReference>
<dbReference type="GO" id="GO:0008270">
    <property type="term" value="F:zinc ion binding"/>
    <property type="evidence" value="ECO:0007669"/>
    <property type="project" value="InterPro"/>
</dbReference>
<dbReference type="GO" id="GO:0060348">
    <property type="term" value="P:bone development"/>
    <property type="evidence" value="ECO:0000315"/>
    <property type="project" value="MGI"/>
</dbReference>
<dbReference type="GO" id="GO:0006346">
    <property type="term" value="P:DNA methylation-dependent constitutive heterochromatin formation"/>
    <property type="evidence" value="ECO:0000315"/>
    <property type="project" value="UniProtKB"/>
</dbReference>
<dbReference type="GO" id="GO:0001833">
    <property type="term" value="P:inner cell mass cell proliferation"/>
    <property type="evidence" value="ECO:0000315"/>
    <property type="project" value="MGI"/>
</dbReference>
<dbReference type="GO" id="GO:0032259">
    <property type="term" value="P:methylation"/>
    <property type="evidence" value="ECO:0007669"/>
    <property type="project" value="UniProtKB-KW"/>
</dbReference>
<dbReference type="GO" id="GO:0045869">
    <property type="term" value="P:negative regulation of single stranded viral RNA replication via double stranded DNA intermediate"/>
    <property type="evidence" value="ECO:0000315"/>
    <property type="project" value="UniProtKB"/>
</dbReference>
<dbReference type="GO" id="GO:0000122">
    <property type="term" value="P:negative regulation of transcription by RNA polymerase II"/>
    <property type="evidence" value="ECO:0000315"/>
    <property type="project" value="MGI"/>
</dbReference>
<dbReference type="GO" id="GO:0141005">
    <property type="term" value="P:transposable element silencing by heterochromatin formation"/>
    <property type="evidence" value="ECO:0000315"/>
    <property type="project" value="UniProtKB"/>
</dbReference>
<dbReference type="CDD" id="cd01395">
    <property type="entry name" value="HMT_MBD"/>
    <property type="match status" value="1"/>
</dbReference>
<dbReference type="CDD" id="cd10517">
    <property type="entry name" value="SET_SETDB1"/>
    <property type="match status" value="1"/>
</dbReference>
<dbReference type="CDD" id="cd20382">
    <property type="entry name" value="Tudor_SETDB1_rpt1"/>
    <property type="match status" value="1"/>
</dbReference>
<dbReference type="CDD" id="cd21181">
    <property type="entry name" value="Tudor_SETDB1_rpt2"/>
    <property type="match status" value="1"/>
</dbReference>
<dbReference type="FunFam" id="2.170.270.10:FF:000017">
    <property type="entry name" value="Histone-lysine N-methyltransferase"/>
    <property type="match status" value="1"/>
</dbReference>
<dbReference type="FunFam" id="2.170.270.10:FF:000020">
    <property type="entry name" value="Histone-lysine N-methyltransferase"/>
    <property type="match status" value="1"/>
</dbReference>
<dbReference type="FunFam" id="2.30.30.140:FF:000034">
    <property type="entry name" value="Histone-lysine N-methyltransferase"/>
    <property type="match status" value="1"/>
</dbReference>
<dbReference type="FunFam" id="2.30.30.140:FF:000037">
    <property type="entry name" value="Histone-lysine N-methyltransferase"/>
    <property type="match status" value="1"/>
</dbReference>
<dbReference type="FunFam" id="2.30.30.140:FF:000054">
    <property type="entry name" value="Histone-lysine N-methyltransferase"/>
    <property type="match status" value="1"/>
</dbReference>
<dbReference type="Gene3D" id="2.30.30.140">
    <property type="match status" value="3"/>
</dbReference>
<dbReference type="Gene3D" id="2.170.270.10">
    <property type="entry name" value="SET domain"/>
    <property type="match status" value="2"/>
</dbReference>
<dbReference type="InterPro" id="IPR016177">
    <property type="entry name" value="DNA-bd_dom_sf"/>
</dbReference>
<dbReference type="InterPro" id="IPR040880">
    <property type="entry name" value="DUF5604"/>
</dbReference>
<dbReference type="InterPro" id="IPR025796">
    <property type="entry name" value="Hist-Lys_N-MeTrfase_SETDB1"/>
</dbReference>
<dbReference type="InterPro" id="IPR001739">
    <property type="entry name" value="Methyl_CpG_DNA-bd"/>
</dbReference>
<dbReference type="InterPro" id="IPR003616">
    <property type="entry name" value="Post-SET_dom"/>
</dbReference>
<dbReference type="InterPro" id="IPR007728">
    <property type="entry name" value="Pre-SET_dom"/>
</dbReference>
<dbReference type="InterPro" id="IPR001214">
    <property type="entry name" value="SET_dom"/>
</dbReference>
<dbReference type="InterPro" id="IPR046341">
    <property type="entry name" value="SET_dom_sf"/>
</dbReference>
<dbReference type="InterPro" id="IPR047232">
    <property type="entry name" value="SETDB1/2-like_MBD"/>
</dbReference>
<dbReference type="InterPro" id="IPR051516">
    <property type="entry name" value="SETDB_methyltransferase"/>
</dbReference>
<dbReference type="InterPro" id="IPR002999">
    <property type="entry name" value="Tudor"/>
</dbReference>
<dbReference type="InterPro" id="IPR041292">
    <property type="entry name" value="Tudor_4"/>
</dbReference>
<dbReference type="InterPro" id="IPR041291">
    <property type="entry name" value="TUDOR_5"/>
</dbReference>
<dbReference type="PANTHER" id="PTHR46024">
    <property type="entry name" value="HISTONE-LYSINE N-METHYLTRANSFERASE EGGLESS"/>
    <property type="match status" value="1"/>
</dbReference>
<dbReference type="PANTHER" id="PTHR46024:SF2">
    <property type="entry name" value="HISTONE-LYSINE N-METHYLTRANSFERASE SETDB1"/>
    <property type="match status" value="1"/>
</dbReference>
<dbReference type="Pfam" id="PF18300">
    <property type="entry name" value="DUF5604"/>
    <property type="match status" value="1"/>
</dbReference>
<dbReference type="Pfam" id="PF01429">
    <property type="entry name" value="MBD"/>
    <property type="match status" value="1"/>
</dbReference>
<dbReference type="Pfam" id="PF05033">
    <property type="entry name" value="Pre-SET"/>
    <property type="match status" value="1"/>
</dbReference>
<dbReference type="Pfam" id="PF00856">
    <property type="entry name" value="SET"/>
    <property type="match status" value="1"/>
</dbReference>
<dbReference type="Pfam" id="PF18358">
    <property type="entry name" value="Tudor_4"/>
    <property type="match status" value="1"/>
</dbReference>
<dbReference type="Pfam" id="PF18359">
    <property type="entry name" value="Tudor_5"/>
    <property type="match status" value="1"/>
</dbReference>
<dbReference type="SMART" id="SM00391">
    <property type="entry name" value="MBD"/>
    <property type="match status" value="1"/>
</dbReference>
<dbReference type="SMART" id="SM00468">
    <property type="entry name" value="PreSET"/>
    <property type="match status" value="1"/>
</dbReference>
<dbReference type="SMART" id="SM00317">
    <property type="entry name" value="SET"/>
    <property type="match status" value="1"/>
</dbReference>
<dbReference type="SMART" id="SM00333">
    <property type="entry name" value="TUDOR"/>
    <property type="match status" value="2"/>
</dbReference>
<dbReference type="SUPFAM" id="SSF54171">
    <property type="entry name" value="DNA-binding domain"/>
    <property type="match status" value="1"/>
</dbReference>
<dbReference type="SUPFAM" id="SSF82199">
    <property type="entry name" value="SET domain"/>
    <property type="match status" value="1"/>
</dbReference>
<dbReference type="PROSITE" id="PS50982">
    <property type="entry name" value="MBD"/>
    <property type="match status" value="1"/>
</dbReference>
<dbReference type="PROSITE" id="PS50868">
    <property type="entry name" value="POST_SET"/>
    <property type="match status" value="1"/>
</dbReference>
<dbReference type="PROSITE" id="PS50867">
    <property type="entry name" value="PRE_SET"/>
    <property type="match status" value="1"/>
</dbReference>
<dbReference type="PROSITE" id="PS51573">
    <property type="entry name" value="SAM_MT43_SUVAR39_1"/>
    <property type="match status" value="1"/>
</dbReference>
<dbReference type="PROSITE" id="PS50280">
    <property type="entry name" value="SET"/>
    <property type="match status" value="1"/>
</dbReference>
<proteinExistence type="evidence at protein level"/>
<gene>
    <name evidence="26" type="primary">Setdb1</name>
    <name evidence="24" type="synonym">Eset</name>
    <name type="synonym">Kiaa0067</name>
</gene>
<reference key="1">
    <citation type="journal article" date="2002" name="Oncogene">
        <title>Molecular cloning of ESET, a novel histone H3-specific methyltransferase that interacts with ERG transcription factor.</title>
        <authorList>
            <person name="Yang L."/>
            <person name="Xia L."/>
            <person name="Wu D.Y."/>
            <person name="Wang H."/>
            <person name="Chansky H.A."/>
            <person name="Schubach W.H."/>
            <person name="Hickstein D.D."/>
            <person name="Zhang Y."/>
        </authorList>
    </citation>
    <scope>NUCLEOTIDE SEQUENCE [MRNA] (ISOFORMS 1 AND 2)</scope>
    <scope>ENZYME ACTIVITY</scope>
    <scope>INTERACTION WITH ERG</scope>
    <scope>MUTAGENESIS OF CYS-798 AND CYS-1242</scope>
    <scope>FUNCTION</scope>
    <source>
        <strain>BDF1</strain>
        <tissue>Blood</tissue>
    </source>
</reference>
<reference key="2">
    <citation type="journal article" date="2003" name="Biochim. Biophys. Acta">
        <title>Genomic structure and expression of the mouse ESET gene encoding an ERG-associated histone methyltransferase with a SET domain.</title>
        <authorList>
            <person name="Blackburn M.L."/>
            <person name="Chansky H.A."/>
            <person name="Zielinska-Kwiatkowska A."/>
            <person name="Matsui Y."/>
            <person name="Yang L."/>
        </authorList>
    </citation>
    <scope>NUCLEOTIDE SEQUENCE [MRNA] (ISOFORM 5)</scope>
    <scope>NUCLEOTIDE SEQUENCE [GENOMIC DNA]</scope>
    <scope>ALTERNATIVE SPLICING (ISOFORM 6)</scope>
    <scope>TISSUE SPECIFICITY</scope>
    <source>
        <strain>BDF1</strain>
        <strain>C57BL/6J X DBA/2</strain>
    </source>
</reference>
<reference key="3">
    <citation type="journal article" date="2004" name="Genome Res.">
        <title>The status, quality, and expansion of the NIH full-length cDNA project: the Mammalian Gene Collection (MGC).</title>
        <authorList>
            <consortium name="The MGC Project Team"/>
        </authorList>
    </citation>
    <scope>NUCLEOTIDE SEQUENCE [LARGE SCALE MRNA] (ISOFORMS 3 AND 7)</scope>
    <source>
        <strain>C57BL/6J</strain>
        <tissue>Brain</tissue>
    </source>
</reference>
<reference key="4">
    <citation type="journal article" date="2003" name="DNA Res.">
        <title>Prediction of the coding sequences of mouse homologues of KIAA gene: II. The complete nucleotide sequences of 400 mouse KIAA-homologous cDNAs identified by screening of terminal sequences of cDNA clones randomly sampled from size-fractionated libraries.</title>
        <authorList>
            <person name="Okazaki N."/>
            <person name="Kikuno R."/>
            <person name="Ohara R."/>
            <person name="Inamoto S."/>
            <person name="Aizawa H."/>
            <person name="Yuasa S."/>
            <person name="Nakajima D."/>
            <person name="Nagase T."/>
            <person name="Ohara O."/>
            <person name="Koga H."/>
        </authorList>
    </citation>
    <scope>NUCLEOTIDE SEQUENCE [LARGE SCALE MRNA] OF 145-1307 (ISOFORM 4)</scope>
    <source>
        <tissue>Brain</tissue>
    </source>
</reference>
<reference key="5">
    <citation type="journal article" date="2005" name="Science">
        <title>The transcriptional landscape of the mammalian genome.</title>
        <authorList>
            <person name="Carninci P."/>
            <person name="Kasukawa T."/>
            <person name="Katayama S."/>
            <person name="Gough J."/>
            <person name="Frith M.C."/>
            <person name="Maeda N."/>
            <person name="Oyama R."/>
            <person name="Ravasi T."/>
            <person name="Lenhard B."/>
            <person name="Wells C."/>
            <person name="Kodzius R."/>
            <person name="Shimokawa K."/>
            <person name="Bajic V.B."/>
            <person name="Brenner S.E."/>
            <person name="Batalov S."/>
            <person name="Forrest A.R."/>
            <person name="Zavolan M."/>
            <person name="Davis M.J."/>
            <person name="Wilming L.G."/>
            <person name="Aidinis V."/>
            <person name="Allen J.E."/>
            <person name="Ambesi-Impiombato A."/>
            <person name="Apweiler R."/>
            <person name="Aturaliya R.N."/>
            <person name="Bailey T.L."/>
            <person name="Bansal M."/>
            <person name="Baxter L."/>
            <person name="Beisel K.W."/>
            <person name="Bersano T."/>
            <person name="Bono H."/>
            <person name="Chalk A.M."/>
            <person name="Chiu K.P."/>
            <person name="Choudhary V."/>
            <person name="Christoffels A."/>
            <person name="Clutterbuck D.R."/>
            <person name="Crowe M.L."/>
            <person name="Dalla E."/>
            <person name="Dalrymple B.P."/>
            <person name="de Bono B."/>
            <person name="Della Gatta G."/>
            <person name="di Bernardo D."/>
            <person name="Down T."/>
            <person name="Engstrom P."/>
            <person name="Fagiolini M."/>
            <person name="Faulkner G."/>
            <person name="Fletcher C.F."/>
            <person name="Fukushima T."/>
            <person name="Furuno M."/>
            <person name="Futaki S."/>
            <person name="Gariboldi M."/>
            <person name="Georgii-Hemming P."/>
            <person name="Gingeras T.R."/>
            <person name="Gojobori T."/>
            <person name="Green R.E."/>
            <person name="Gustincich S."/>
            <person name="Harbers M."/>
            <person name="Hayashi Y."/>
            <person name="Hensch T.K."/>
            <person name="Hirokawa N."/>
            <person name="Hill D."/>
            <person name="Huminiecki L."/>
            <person name="Iacono M."/>
            <person name="Ikeo K."/>
            <person name="Iwama A."/>
            <person name="Ishikawa T."/>
            <person name="Jakt M."/>
            <person name="Kanapin A."/>
            <person name="Katoh M."/>
            <person name="Kawasawa Y."/>
            <person name="Kelso J."/>
            <person name="Kitamura H."/>
            <person name="Kitano H."/>
            <person name="Kollias G."/>
            <person name="Krishnan S.P."/>
            <person name="Kruger A."/>
            <person name="Kummerfeld S.K."/>
            <person name="Kurochkin I.V."/>
            <person name="Lareau L.F."/>
            <person name="Lazarevic D."/>
            <person name="Lipovich L."/>
            <person name="Liu J."/>
            <person name="Liuni S."/>
            <person name="McWilliam S."/>
            <person name="Madan Babu M."/>
            <person name="Madera M."/>
            <person name="Marchionni L."/>
            <person name="Matsuda H."/>
            <person name="Matsuzawa S."/>
            <person name="Miki H."/>
            <person name="Mignone F."/>
            <person name="Miyake S."/>
            <person name="Morris K."/>
            <person name="Mottagui-Tabar S."/>
            <person name="Mulder N."/>
            <person name="Nakano N."/>
            <person name="Nakauchi H."/>
            <person name="Ng P."/>
            <person name="Nilsson R."/>
            <person name="Nishiguchi S."/>
            <person name="Nishikawa S."/>
            <person name="Nori F."/>
            <person name="Ohara O."/>
            <person name="Okazaki Y."/>
            <person name="Orlando V."/>
            <person name="Pang K.C."/>
            <person name="Pavan W.J."/>
            <person name="Pavesi G."/>
            <person name="Pesole G."/>
            <person name="Petrovsky N."/>
            <person name="Piazza S."/>
            <person name="Reed J."/>
            <person name="Reid J.F."/>
            <person name="Ring B.Z."/>
            <person name="Ringwald M."/>
            <person name="Rost B."/>
            <person name="Ruan Y."/>
            <person name="Salzberg S.L."/>
            <person name="Sandelin A."/>
            <person name="Schneider C."/>
            <person name="Schoenbach C."/>
            <person name="Sekiguchi K."/>
            <person name="Semple C.A."/>
            <person name="Seno S."/>
            <person name="Sessa L."/>
            <person name="Sheng Y."/>
            <person name="Shibata Y."/>
            <person name="Shimada H."/>
            <person name="Shimada K."/>
            <person name="Silva D."/>
            <person name="Sinclair B."/>
            <person name="Sperling S."/>
            <person name="Stupka E."/>
            <person name="Sugiura K."/>
            <person name="Sultana R."/>
            <person name="Takenaka Y."/>
            <person name="Taki K."/>
            <person name="Tammoja K."/>
            <person name="Tan S.L."/>
            <person name="Tang S."/>
            <person name="Taylor M.S."/>
            <person name="Tegner J."/>
            <person name="Teichmann S.A."/>
            <person name="Ueda H.R."/>
            <person name="van Nimwegen E."/>
            <person name="Verardo R."/>
            <person name="Wei C.L."/>
            <person name="Yagi K."/>
            <person name="Yamanishi H."/>
            <person name="Zabarovsky E."/>
            <person name="Zhu S."/>
            <person name="Zimmer A."/>
            <person name="Hide W."/>
            <person name="Bult C."/>
            <person name="Grimmond S.M."/>
            <person name="Teasdale R.D."/>
            <person name="Liu E.T."/>
            <person name="Brusic V."/>
            <person name="Quackenbush J."/>
            <person name="Wahlestedt C."/>
            <person name="Mattick J.S."/>
            <person name="Hume D.A."/>
            <person name="Kai C."/>
            <person name="Sasaki D."/>
            <person name="Tomaru Y."/>
            <person name="Fukuda S."/>
            <person name="Kanamori-Katayama M."/>
            <person name="Suzuki M."/>
            <person name="Aoki J."/>
            <person name="Arakawa T."/>
            <person name="Iida J."/>
            <person name="Imamura K."/>
            <person name="Itoh M."/>
            <person name="Kato T."/>
            <person name="Kawaji H."/>
            <person name="Kawagashira N."/>
            <person name="Kawashima T."/>
            <person name="Kojima M."/>
            <person name="Kondo S."/>
            <person name="Konno H."/>
            <person name="Nakano K."/>
            <person name="Ninomiya N."/>
            <person name="Nishio T."/>
            <person name="Okada M."/>
            <person name="Plessy C."/>
            <person name="Shibata K."/>
            <person name="Shiraki T."/>
            <person name="Suzuki S."/>
            <person name="Tagami M."/>
            <person name="Waki K."/>
            <person name="Watahiki A."/>
            <person name="Okamura-Oho Y."/>
            <person name="Suzuki H."/>
            <person name="Kawai J."/>
            <person name="Hayashizaki Y."/>
        </authorList>
    </citation>
    <scope>NUCLEOTIDE SEQUENCE [LARGE SCALE MRNA] OF 289-1307 (ISOFORM 4)</scope>
    <source>
        <strain>NOD</strain>
        <tissue>Thymus</tissue>
    </source>
</reference>
<reference key="6">
    <citation type="journal article" date="2003" name="Biochem. J.">
        <title>An ERG (ets-related gene)-associated histone methyltransferase interacts with histone deacetylases 1/2 and transcription co-repressors mSin3A/B.</title>
        <authorList>
            <person name="Yang L."/>
            <person name="Mei Q."/>
            <person name="Zielinska-Kwiatkowska A."/>
            <person name="Matsui Y."/>
            <person name="Blackburn M.L."/>
            <person name="Benedetti D."/>
            <person name="Krumm A.A."/>
            <person name="Taborsky G.J. Jr."/>
            <person name="Chansky H.A."/>
        </authorList>
    </citation>
    <scope>INTERACTION WITH HDAC1; HDAC2; SIN3A AND SIN3B</scope>
</reference>
<reference key="7">
    <citation type="journal article" date="2010" name="Cell">
        <title>A tissue-specific atlas of mouse protein phosphorylation and expression.</title>
        <authorList>
            <person name="Huttlin E.L."/>
            <person name="Jedrychowski M.P."/>
            <person name="Elias J.E."/>
            <person name="Goswami T."/>
            <person name="Rad R."/>
            <person name="Beausoleil S.A."/>
            <person name="Villen J."/>
            <person name="Haas W."/>
            <person name="Sowa M.E."/>
            <person name="Gygi S.P."/>
        </authorList>
    </citation>
    <scope>PHOSPHORYLATION [LARGE SCALE ANALYSIS] AT SER-112; SER-117 AND THR-120</scope>
    <scope>IDENTIFICATION BY MASS SPECTROMETRY [LARGE SCALE ANALYSIS]</scope>
    <source>
        <tissue>Lung</tissue>
        <tissue>Pancreas</tissue>
        <tissue>Spleen</tissue>
        <tissue>Testis</tissue>
    </source>
</reference>
<reference key="8">
    <citation type="journal article" date="2010" name="Nature">
        <title>Proviral silencing in embryonic stem cells requires the histone methyltransferase ESET.</title>
        <authorList>
            <person name="Matsui T."/>
            <person name="Leung D."/>
            <person name="Miyashita H."/>
            <person name="Maksakova I.A."/>
            <person name="Miyachi H."/>
            <person name="Kimura H."/>
            <person name="Tachibana M."/>
            <person name="Lorincz M.C."/>
            <person name="Shinkai Y."/>
        </authorList>
    </citation>
    <scope>FUNCTION</scope>
    <scope>MUTAGENESIS OF CYS-1242</scope>
</reference>
<reference key="9">
    <citation type="journal article" date="2012" name="Cell">
        <title>Prdm3 and Prdm16 are H3K9me1 methyltransferases required for mammalian heterochromatin integrity.</title>
        <authorList>
            <person name="Pinheiro I."/>
            <person name="Margueron R."/>
            <person name="Shukeir N."/>
            <person name="Eisold M."/>
            <person name="Fritzsch C."/>
            <person name="Richter F.M."/>
            <person name="Mittler G."/>
            <person name="Genoud C."/>
            <person name="Goyama S."/>
            <person name="Kurokawa M."/>
            <person name="Son J."/>
            <person name="Reinberg D."/>
            <person name="Lachner M."/>
            <person name="Jenuwein T."/>
        </authorList>
    </citation>
    <scope>FUNCTION</scope>
    <scope>CATALYTIC ACTIVITY</scope>
</reference>
<reference key="10">
    <citation type="journal article" date="2016" name="Mol. Cell">
        <title>E3-Independent Constitutive Monoubiquitination Complements Histone Methyltransferase Activity of SETDB1.</title>
        <authorList>
            <person name="Sun L."/>
            <person name="Fang J."/>
        </authorList>
    </citation>
    <scope>FUNCTION</scope>
    <scope>UBIQUITINATION AT LYS-884</scope>
</reference>
<reference key="11">
    <citation type="journal article" date="2018" name="Genome Res.">
        <title>A CRISPR knockout screen identifies SETDB1-target retroelement silencing factors in embryonic stem cells.</title>
        <authorList>
            <person name="Fukuda K."/>
            <person name="Okuda A."/>
            <person name="Yusa K."/>
            <person name="Shinkai Y."/>
        </authorList>
    </citation>
    <scope>FUNCTION</scope>
    <scope>INTERACTION WITH RESF1</scope>
    <scope>SUBCELLULAR LOCATION</scope>
</reference>
<reference key="12">
    <citation type="journal article" date="2019" name="Exp. Cell Res.">
        <title>Fam208a orchestrates interaction protein network essential for early embryonic development and cell division.</title>
        <authorList>
            <person name="Gresakova V."/>
            <person name="Novosadova V."/>
            <person name="Prochazkova M."/>
            <person name="Bhargava S."/>
            <person name="Jenickova I."/>
            <person name="Prochazka J."/>
            <person name="Sedlacek R."/>
        </authorList>
    </citation>
    <scope>INTERACTION WITH TASOR</scope>
    <scope>TISSUE SPECIFICITY</scope>
</reference>
<reference key="13">
    <citation type="journal article" date="2024" name="Cell Rep.">
        <title>SETDB1 suppresses NK cell-mediated immunosurveillance in acute myeloid leukemia with granulo-monocytic differentiation.</title>
        <authorList>
            <person name="Chang Y.H."/>
            <person name="Yamamoto K."/>
            <person name="Fujino T."/>
            <person name="Wang T.W."/>
            <person name="Sugimoto E."/>
            <person name="Zhang W."/>
            <person name="Yabushita T."/>
            <person name="Suzaki K."/>
            <person name="Pietsch E.C."/>
            <person name="Weir B.A."/>
            <person name="Crescenzo R."/>
            <person name="Cowley G.S."/>
            <person name="Attar R."/>
            <person name="Philippar U."/>
            <person name="Wunderlich M."/>
            <person name="Mizukawa B."/>
            <person name="Zheng Y."/>
            <person name="Enomoto Y."/>
            <person name="Imai Y."/>
            <person name="Kitamura T."/>
            <person name="Goyama S."/>
        </authorList>
    </citation>
    <scope>FUNCTION</scope>
</reference>
<accession>O88974</accession>
<accession>Q6AXH8</accession>
<accession>Q78N64</accession>
<accession>Q78N65</accession>
<accession>Q80U84</accession>
<accession>Q8BTV6</accession>
<accession>Q8CIX7</accession>
<accession>Q922K1</accession>
<comment type="function">
    <text evidence="2 10 13 14 15 16 18">Histone methyltransferase that specifically trimethylates 'Lys-9' of histone H3 (PubMed:11791185, PubMed:22939622). H3 'Lys-9' trimethylation represents a specific tag for epigenetic transcriptional repression by recruiting HP1 (CBX1, CBX3 and/or CBX5) proteins to methylated histones. Mainly functions in euchromatin regions, thereby playing a central role in the silencing of euchromatic genes (PubMed:27237050, PubMed:39096901). H3 'Lys-9' trimethylation is coordinated with DNA methylation. Probably forms a complex with MBD1 and ATF7IP that represses transcription and couples DNA methylation and histone 'Lys-9' trimethylation. Its activity is dependent on MBD1 and is heritably maintained through DNA replication by being recruited by CAF-1. SETDB1 is targeted to histone H3 by TRIM28/TIF1B, a factor recruited by KRAB zinc-finger proteins. Probably forms a corepressor complex required for activated KRAS-mediated promoter hypermethylation and transcriptional silencing of tumor suppressor genes (TSGs) or other tumor-related genes in colorectal cancer (CRC) cells (By similarity). Required to maintain a transcriptionally repressive state of genes in undifferentiated embryonic stem cells (ESCs) (By similarity). In ESCs, in collaboration with TRIM28, is also required for H3K9me3 and silencing of endogenous and introduced retroviruses in a DNA-methylation independent-pathway (PubMed:20164836, PubMed:27237050, PubMed:29728365). Associates at promoter regions of tumor suppressor genes (TSGs) leading to their gene silencing. The SETDB1-TRIM28-ZNF274 complex may play a role in recruiting ATRX to the 3'-exons of zinc-finger coding genes with atypical chromatin signatures to establish or maintain/protect H3K9me3 at these transcriptionally active regions (By similarity).</text>
</comment>
<comment type="catalytic activity">
    <reaction evidence="8 10 14">
        <text>N(6),N(6)-dimethyl-L-lysyl(9)-[histone H3] + S-adenosyl-L-methionine = N(6),N(6),N(6)-trimethyl-L-lysyl(9)-[histone H3] + S-adenosyl-L-homocysteine + H(+)</text>
        <dbReference type="Rhea" id="RHEA:60288"/>
        <dbReference type="Rhea" id="RHEA-COMP:15538"/>
        <dbReference type="Rhea" id="RHEA-COMP:15541"/>
        <dbReference type="ChEBI" id="CHEBI:15378"/>
        <dbReference type="ChEBI" id="CHEBI:57856"/>
        <dbReference type="ChEBI" id="CHEBI:59789"/>
        <dbReference type="ChEBI" id="CHEBI:61961"/>
        <dbReference type="ChEBI" id="CHEBI:61976"/>
        <dbReference type="EC" id="2.1.1.366"/>
    </reaction>
    <physiologicalReaction direction="left-to-right" evidence="10 14">
        <dbReference type="Rhea" id="RHEA:60289"/>
    </physiologicalReaction>
</comment>
<comment type="subunit">
    <text evidence="2 10 11 16 17">Part of a complex containing at least CDYL, REST, WIZ, SETDB1, EHMT1 and EHMT2. Forms a complex with ATRX, TRIM28 and ZNF274 (By similarity). Probably part of a corepressor complex containing ZNF304, TRIM28, SETDB1 and DNMT1. Interacts with TRIM28/TIF1B. Interacts with ATF7IP and ATF7IP2; the interaction with ATF7IP is required to stimulate histone methyltransferase activity and facilitate the conversion of dimethylated to trimethylated H3 'Lys-9'. Interacts with MBD1; interaction is abolished when MBD1 is sumoylated. Interacts with CBX1 and CBX5. Interacts with DNMT3A and DNMT3B. Interacts with SUMO2. Interacts with MPHOSPH8 (By similarity). Interacts with ERG (PubMed:11791185). Interacts with HDAC1, HDAC2, SIN3A, SIN3B (PubMed:12398767). Interacts with ATRX. Interacts with RESF1 (PubMed:29728365). Interacts with ZNF638 (By similarity). Interacts with TASOR (PubMed:31112734). Interacts with ZNF263; recruited to the SIX3 promoter along with other proteins involved in chromatin modification and transcriptional corepression where it contributes to transcriptional repression (By similarity). Interacts with PHF13; the interaction probably enhances SETDB1 chromatin-associated levels and activity (By similarity). Interacts with VRK1 (By similarity).</text>
</comment>
<comment type="interaction">
    <interactant intactId="EBI-79658">
        <id>O88974</id>
    </interactant>
    <interactant intactId="EBI-79647">
        <id>P81270</id>
        <label>Erg</label>
    </interactant>
    <organismsDiffer>false</organismsDiffer>
    <experiments>3</experiments>
</comment>
<comment type="interaction">
    <interactant intactId="EBI-79658">
        <id>O88974</id>
    </interactant>
    <interactant intactId="EBI-647644">
        <id>E9Q5K9</id>
        <label>Ythdc1</label>
    </interactant>
    <organismsDiffer>false</organismsDiffer>
    <experiments>2</experiments>
</comment>
<comment type="subcellular location">
    <subcellularLocation>
        <location evidence="16">Nucleus</location>
    </subcellularLocation>
    <subcellularLocation>
        <location evidence="16">Chromosome</location>
    </subcellularLocation>
    <text evidence="2">Associated with non-pericentromeric regions of chromatin.</text>
</comment>
<comment type="alternative products">
    <event type="alternative splicing"/>
    <isoform>
        <id>O88974-1</id>
        <name>1</name>
        <sequence type="displayed"/>
    </isoform>
    <isoform>
        <id>O88974-2</id>
        <name>2</name>
        <sequence type="described" ref="VSP_002219 VSP_002220"/>
    </isoform>
    <isoform>
        <id>O88974-3</id>
        <name>3</name>
        <sequence type="described" ref="VSP_002221"/>
    </isoform>
    <isoform>
        <id>O88974-4</id>
        <name>4</name>
        <sequence type="described" ref="VSP_024031"/>
    </isoform>
    <isoform>
        <id>O88974-5</id>
        <name>5</name>
        <sequence type="described" ref="VSP_024032"/>
    </isoform>
    <isoform>
        <id>O88974-6</id>
        <name>6</name>
        <sequence type="described" ref="VSP_024031 VSP_024032"/>
    </isoform>
    <isoform>
        <id>O88974-7</id>
        <name>7</name>
        <sequence type="described" ref="VSP_024033"/>
    </isoform>
    <text>Experimental confirmation may be lacking for some isoforms.</text>
</comment>
<comment type="tissue specificity">
    <text evidence="12 17">Ubiquitously expressed (PubMed:14522075). Strong expression in liver and testis (PubMed:14522075, PubMed:31112734). Expressed in the brain, lungs, kidneys, uterus and seminal vesicles (PubMed:31112734).</text>
</comment>
<comment type="domain">
    <text>The pre-SET, SET and post-SET domains are all required for methyltransferase activity. The 347-amino-acid insertion in the SET domain has no effect on the catalytic activity.</text>
</comment>
<comment type="domain">
    <text evidence="1">In the pre-SET domain, Cys residues bind 3 zinc ions that are arranged in a triangular cluster; some of these Cys residues contribute to the binding of two zinc ions within the cluster.</text>
</comment>
<comment type="PTM">
    <text evidence="2">Degraded by the proteasome, shielded by interaction with ATF7IP.</text>
</comment>
<comment type="PTM">
    <text evidence="15">Monoubiquitinated at Lys-884 by E2 enzymes UBE2E family. The conjugated-Ub is protected from deubiquitination through the SET domain. Monoubiquitination at Lys-884 is required for catalytic activity and H3K9 methylation and endogenous retrovirus silencing.</text>
</comment>
<comment type="similarity">
    <text evidence="8">Belongs to the class V-like SAM-binding methyltransferase superfamily. Histone-lysine methyltransferase family. Suvar3-9 subfamily.</text>
</comment>
<sequence>MSSLPGCMSLAAAPAAADSAEIAELQQAVVEELGISMEELRQYIDEELEKMDCIQQRKKQLAELETWVLQKESEVAYVDRLFDDASREVTNCESLVKDFYSKLGLQYHDSSSEDEASRPTEIIEIPDEDDDVLSIDSGDAGSRTPKDQKLREAMAALRKSAQDVQKFMDAVNKKSSSQDLHKGTLGQVSGELSKDGDLIVSMRILGKKRTKTWHKGTLIAIQTVGLGKKYKVKFDNKGKSLLSGNHIAYDYHPPADKLFVGSRVVAKYKDGNQVWLYAGIVAETPNVKNKLRFLIFFDDGYASYVTQSELYPICRPLKKTWEDIEDSSCRDFIEEYITAYPNRPMVLLKSGQLIKTEWEGTWWKSRVEEVDGSLVRILFLDDKRCEWIYRGSTRLEPMFSMKTSSASAMEKKQGGQLRTRPNMGAVRSKGPVVQYTQDLTGTGIQFKPMEPLQPIAPPAPLPIPPLSPQAADTDLESQLAQSRKQVAKKSTSFRPGSVGSGHSSPTSSTLSENVSAGKLGINQTYRSPLASVTSTPASAAPPVPPVPPGPPTPPGPPAPPGPLAPPAFHGMLERAPAEPSYRAPMEKLFYLPHVCSYTCLSRIRPMRNEQYRGKNPLLVPLLYDFRRMTARRRVNRKMGFHVIYKTPCGLCLRTMQEIERYLFETGCDFLFLEMFCLDPYVLVDRKFQPFKPFYYILDITYGKEDVPLSCVNEIDTTPPPQVAYSKERIPGKGVFINTGPEFLVGCDCKDGCRDKSKCACHQLTIQATACTPGGQVNPNSGYQYKRLEECLPTGVYECNKRCNCDPNMCTNRLVQHGLQVRLQLFKTQNKGWGIRCLDDIAKGSFVCIYAGKILTDDFADKEGLEMGDEYFANLDHIESVENFKEGYESDVPTSSDSSGVDMKDQEDGNSGSEDPEESNDDSSDDNFCKDEDFSTSSVWRSYATRRQTRGQKENELSEMTSKDSRPPDLGPPHVPIPSSVSVGGCNPPSSEETPKNKVASWLSCNSVSEGGFADSDSRSSFKTSEGGDGRAGGGRGEAERASTSGLSFKDEGDNKQPKKEDPENRNKMPVVTEGSQNHGHNPPMKSEGLRRPASKMSVLQSQRVVTSTQSNPDDILTLSSSTESEGESGTSRKPTAGHTSATAVDSDDIQTISSGSDGDDFEDKKNLSGPTKRQVAVKSTRGFALKSTHGIAIKSTNMASVDKGESAPVRKNTRQFYDGEESCYIIDAKLEGNLGRYLNHSCSPNLFVQNVFVDTHDLRFPWVAFFASKRIRAGTELTWDYNYEVGSVEGKELLCCCGAIECRGRLL</sequence>
<protein>
    <recommendedName>
        <fullName evidence="25">Histone-lysine N-methyltransferase SETDB1</fullName>
        <ecNumber evidence="10 14">2.1.1.366</ecNumber>
    </recommendedName>
    <alternativeName>
        <fullName>ERG-associated protein with SET domain</fullName>
        <shortName evidence="24">ESET</shortName>
    </alternativeName>
    <alternativeName>
        <fullName>SET domain bifurcated 1</fullName>
    </alternativeName>
</protein>
<keyword id="KW-0025">Alternative splicing</keyword>
<keyword id="KW-0156">Chromatin regulator</keyword>
<keyword id="KW-0158">Chromosome</keyword>
<keyword id="KW-0175">Coiled coil</keyword>
<keyword id="KW-1017">Isopeptide bond</keyword>
<keyword id="KW-0479">Metal-binding</keyword>
<keyword id="KW-0488">Methylation</keyword>
<keyword id="KW-0489">Methyltransferase</keyword>
<keyword id="KW-0539">Nucleus</keyword>
<keyword id="KW-0597">Phosphoprotein</keyword>
<keyword id="KW-1185">Reference proteome</keyword>
<keyword id="KW-0677">Repeat</keyword>
<keyword id="KW-0678">Repressor</keyword>
<keyword id="KW-0949">S-adenosyl-L-methionine</keyword>
<keyword id="KW-0804">Transcription</keyword>
<keyword id="KW-0805">Transcription regulation</keyword>
<keyword id="KW-0808">Transferase</keyword>
<keyword id="KW-0832">Ubl conjugation</keyword>
<keyword id="KW-0862">Zinc</keyword>
<organism>
    <name type="scientific">Mus musculus</name>
    <name type="common">Mouse</name>
    <dbReference type="NCBI Taxonomy" id="10090"/>
    <lineage>
        <taxon>Eukaryota</taxon>
        <taxon>Metazoa</taxon>
        <taxon>Chordata</taxon>
        <taxon>Craniata</taxon>
        <taxon>Vertebrata</taxon>
        <taxon>Euteleostomi</taxon>
        <taxon>Mammalia</taxon>
        <taxon>Eutheria</taxon>
        <taxon>Euarchontoglires</taxon>
        <taxon>Glires</taxon>
        <taxon>Rodentia</taxon>
        <taxon>Myomorpha</taxon>
        <taxon>Muroidea</taxon>
        <taxon>Muridae</taxon>
        <taxon>Murinae</taxon>
        <taxon>Mus</taxon>
        <taxon>Mus</taxon>
    </lineage>
</organism>
<name>SETB1_MOUSE</name>
<feature type="chain" id="PRO_0000186065" description="Histone-lysine N-methyltransferase SETDB1">
    <location>
        <begin position="1"/>
        <end position="1307"/>
    </location>
</feature>
<feature type="domain" description="Tudor 1">
    <location>
        <begin position="257"/>
        <end position="320"/>
    </location>
</feature>
<feature type="domain" description="Tudor 2">
    <location>
        <begin position="347"/>
        <end position="403"/>
    </location>
</feature>
<feature type="domain" description="MBD" evidence="7">
    <location>
        <begin position="611"/>
        <end position="682"/>
    </location>
</feature>
<feature type="domain" description="Pre-SET" evidence="5">
    <location>
        <begin position="744"/>
        <end position="817"/>
    </location>
</feature>
<feature type="domain" description="SET" evidence="6">
    <location>
        <begin position="820"/>
        <end position="1282"/>
    </location>
</feature>
<feature type="domain" description="Post-SET" evidence="4">
    <location>
        <begin position="1291"/>
        <end position="1307"/>
    </location>
</feature>
<feature type="region of interest" description="Disordered" evidence="9">
    <location>
        <begin position="127"/>
        <end position="148"/>
    </location>
</feature>
<feature type="region of interest" description="Disordered" evidence="9">
    <location>
        <begin position="404"/>
        <end position="424"/>
    </location>
</feature>
<feature type="region of interest" description="Disordered" evidence="9">
    <location>
        <begin position="444"/>
        <end position="512"/>
    </location>
</feature>
<feature type="region of interest" description="Disordered" evidence="9">
    <location>
        <begin position="531"/>
        <end position="570"/>
    </location>
</feature>
<feature type="region of interest" description="Disordered" evidence="9">
    <location>
        <begin position="885"/>
        <end position="1174"/>
    </location>
</feature>
<feature type="coiled-coil region" evidence="3">
    <location>
        <begin position="30"/>
        <end position="65"/>
    </location>
</feature>
<feature type="compositionally biased region" description="Pro residues" evidence="9">
    <location>
        <begin position="454"/>
        <end position="467"/>
    </location>
</feature>
<feature type="compositionally biased region" description="Polar residues" evidence="9">
    <location>
        <begin position="476"/>
        <end position="494"/>
    </location>
</feature>
<feature type="compositionally biased region" description="Low complexity" evidence="9">
    <location>
        <begin position="495"/>
        <end position="512"/>
    </location>
</feature>
<feature type="compositionally biased region" description="Pro residues" evidence="9">
    <location>
        <begin position="539"/>
        <end position="565"/>
    </location>
</feature>
<feature type="compositionally biased region" description="Acidic residues" evidence="9">
    <location>
        <begin position="913"/>
        <end position="924"/>
    </location>
</feature>
<feature type="compositionally biased region" description="Basic and acidic residues" evidence="9">
    <location>
        <begin position="950"/>
        <end position="966"/>
    </location>
</feature>
<feature type="compositionally biased region" description="Basic and acidic residues" evidence="9">
    <location>
        <begin position="1048"/>
        <end position="1066"/>
    </location>
</feature>
<feature type="compositionally biased region" description="Polar residues" evidence="9">
    <location>
        <begin position="1097"/>
        <end position="1112"/>
    </location>
</feature>
<feature type="compositionally biased region" description="Low complexity" evidence="9">
    <location>
        <begin position="1116"/>
        <end position="1131"/>
    </location>
</feature>
<feature type="compositionally biased region" description="Polar residues" evidence="9">
    <location>
        <begin position="1137"/>
        <end position="1156"/>
    </location>
</feature>
<feature type="binding site" evidence="1">
    <location>
        <position position="746"/>
    </location>
    <ligand>
        <name>Zn(2+)</name>
        <dbReference type="ChEBI" id="CHEBI:29105"/>
        <label>1</label>
    </ligand>
</feature>
<feature type="binding site" evidence="1">
    <location>
        <position position="746"/>
    </location>
    <ligand>
        <name>Zn(2+)</name>
        <dbReference type="ChEBI" id="CHEBI:29105"/>
        <label>2</label>
    </ligand>
</feature>
<feature type="binding site" evidence="1">
    <location>
        <position position="748"/>
    </location>
    <ligand>
        <name>Zn(2+)</name>
        <dbReference type="ChEBI" id="CHEBI:29105"/>
        <label>1</label>
    </ligand>
</feature>
<feature type="binding site" evidence="1">
    <location>
        <position position="752"/>
    </location>
    <ligand>
        <name>Zn(2+)</name>
        <dbReference type="ChEBI" id="CHEBI:29105"/>
        <label>1</label>
    </ligand>
</feature>
<feature type="binding site" evidence="1">
    <location>
        <position position="752"/>
    </location>
    <ligand>
        <name>Zn(2+)</name>
        <dbReference type="ChEBI" id="CHEBI:29105"/>
        <label>3</label>
    </ligand>
</feature>
<feature type="binding site" evidence="1">
    <location>
        <position position="758"/>
    </location>
    <ligand>
        <name>Zn(2+)</name>
        <dbReference type="ChEBI" id="CHEBI:29105"/>
        <label>1</label>
    </ligand>
</feature>
<feature type="binding site" evidence="1">
    <location>
        <position position="760"/>
    </location>
    <ligand>
        <name>Zn(2+)</name>
        <dbReference type="ChEBI" id="CHEBI:29105"/>
        <label>2</label>
    </ligand>
</feature>
<feature type="binding site" evidence="1">
    <location>
        <position position="798"/>
    </location>
    <ligand>
        <name>Zn(2+)</name>
        <dbReference type="ChEBI" id="CHEBI:29105"/>
        <label>2</label>
    </ligand>
</feature>
<feature type="binding site" evidence="1">
    <location>
        <position position="798"/>
    </location>
    <ligand>
        <name>Zn(2+)</name>
        <dbReference type="ChEBI" id="CHEBI:29105"/>
        <label>3</label>
    </ligand>
</feature>
<feature type="binding site" evidence="1">
    <location>
        <position position="802"/>
    </location>
    <ligand>
        <name>Zn(2+)</name>
        <dbReference type="ChEBI" id="CHEBI:29105"/>
        <label>2</label>
    </ligand>
</feature>
<feature type="binding site" evidence="1">
    <location>
        <position position="804"/>
    </location>
    <ligand>
        <name>Zn(2+)</name>
        <dbReference type="ChEBI" id="CHEBI:29105"/>
        <label>3</label>
    </ligand>
</feature>
<feature type="binding site" evidence="1">
    <location>
        <position position="809"/>
    </location>
    <ligand>
        <name>Zn(2+)</name>
        <dbReference type="ChEBI" id="CHEBI:29105"/>
        <label>3</label>
    </ligand>
</feature>
<feature type="binding site" evidence="1">
    <location>
        <begin position="830"/>
        <end position="832"/>
    </location>
    <ligand>
        <name>S-adenosyl-L-methionine</name>
        <dbReference type="ChEBI" id="CHEBI:59789"/>
    </ligand>
</feature>
<feature type="binding site" evidence="6">
    <location>
        <position position="868"/>
    </location>
    <ligand>
        <name>S-adenosyl-L-methionine</name>
        <dbReference type="ChEBI" id="CHEBI:59789"/>
    </ligand>
</feature>
<feature type="binding site" evidence="6">
    <location>
        <position position="870"/>
    </location>
    <ligand>
        <name>S-adenosyl-L-methionine</name>
        <dbReference type="ChEBI" id="CHEBI:59789"/>
    </ligand>
</feature>
<feature type="binding site" evidence="6">
    <location>
        <position position="1236"/>
    </location>
    <ligand>
        <name>S-adenosyl-L-methionine</name>
        <dbReference type="ChEBI" id="CHEBI:59789"/>
    </ligand>
</feature>
<feature type="binding site" evidence="1">
    <location>
        <begin position="1239"/>
        <end position="1240"/>
    </location>
    <ligand>
        <name>S-adenosyl-L-methionine</name>
        <dbReference type="ChEBI" id="CHEBI:59789"/>
    </ligand>
</feature>
<feature type="binding site" evidence="1">
    <location>
        <position position="1242"/>
    </location>
    <ligand>
        <name>Zn(2+)</name>
        <dbReference type="ChEBI" id="CHEBI:29105"/>
        <label>4</label>
    </ligand>
</feature>
<feature type="binding site" evidence="1">
    <location>
        <position position="1295"/>
    </location>
    <ligand>
        <name>Zn(2+)</name>
        <dbReference type="ChEBI" id="CHEBI:29105"/>
        <label>4</label>
    </ligand>
</feature>
<feature type="binding site" evidence="1">
    <location>
        <position position="1297"/>
    </location>
    <ligand>
        <name>Zn(2+)</name>
        <dbReference type="ChEBI" id="CHEBI:29105"/>
        <label>4</label>
    </ligand>
</feature>
<feature type="binding site" evidence="1">
    <location>
        <position position="1302"/>
    </location>
    <ligand>
        <name>Zn(2+)</name>
        <dbReference type="ChEBI" id="CHEBI:29105"/>
        <label>4</label>
    </ligand>
</feature>
<feature type="modified residue" description="Phosphoserine" evidence="27">
    <location>
        <position position="112"/>
    </location>
</feature>
<feature type="modified residue" description="Phosphoserine" evidence="27">
    <location>
        <position position="117"/>
    </location>
</feature>
<feature type="modified residue" description="Phosphothreonine" evidence="27">
    <location>
        <position position="120"/>
    </location>
</feature>
<feature type="modified residue" description="Phosphoserine" evidence="2">
    <location>
        <position position="1042"/>
    </location>
</feature>
<feature type="modified residue" description="N6,N6,N6-trimethyllysine; alternate" evidence="2">
    <location>
        <position position="1186"/>
    </location>
</feature>
<feature type="modified residue" description="N6,N6-dimethyllysine; alternate" evidence="2">
    <location>
        <position position="1186"/>
    </location>
</feature>
<feature type="modified residue" description="N6,N6,N6-trimethyllysine; alternate" evidence="2">
    <location>
        <position position="1194"/>
    </location>
</feature>
<feature type="modified residue" description="N6,N6-dimethyllysine; alternate" evidence="2">
    <location>
        <position position="1194"/>
    </location>
</feature>
<feature type="cross-link" description="Glycyl lysine isopeptide (Lys-Gly) (interchain with G-Cter in SUMO2); alternate" evidence="2">
    <location>
        <position position="182"/>
    </location>
</feature>
<feature type="cross-link" description="Glycyl lysine isopeptide (Lys-Gly) (interchain with G-Cter in ubiquitin); alternate" evidence="2">
    <location>
        <position position="182"/>
    </location>
</feature>
<feature type="cross-link" description="Glycyl lysine isopeptide (Lys-Gly) (interchain with G-Cter in ubiquitin)" evidence="15">
    <location>
        <position position="884"/>
    </location>
</feature>
<feature type="cross-link" description="Glycyl lysine isopeptide (Lys-Gly) (interchain with G-Cter in SUMO1); alternate" evidence="2">
    <location>
        <position position="1049"/>
    </location>
</feature>
<feature type="cross-link" description="Glycyl lysine isopeptide (Lys-Gly) (interchain with G-Cter in SUMO2); alternate" evidence="2">
    <location>
        <position position="1049"/>
    </location>
</feature>
<feature type="cross-link" description="Glycyl lysine isopeptide (Lys-Gly) (interchain with G-Cter in SUMO2)" evidence="2">
    <location>
        <position position="1055"/>
    </location>
</feature>
<feature type="cross-link" description="Glycyl lysine isopeptide (Lys-Gly) (interchain with G-Cter in SUMO2)" evidence="2">
    <location>
        <position position="1085"/>
    </location>
</feature>
<feature type="cross-link" description="Glycyl lysine isopeptide (Lys-Gly) (interchain with G-Cter in SUMO2)" evidence="2">
    <location>
        <position position="1165"/>
    </location>
</feature>
<feature type="splice variant" id="VSP_002221" description="In isoform 3." evidence="22">
    <location>
        <begin position="1"/>
        <end position="807"/>
    </location>
</feature>
<feature type="splice variant" id="VSP_024031" description="In isoform 4 and isoform 6." evidence="20 23">
    <original>D</original>
    <variation>ES</variation>
    <location>
        <position position="474"/>
    </location>
</feature>
<feature type="splice variant" id="VSP_002219" description="In isoform 2." evidence="19">
    <original>SRKQV</original>
    <variation>AQSQK</variation>
    <location>
        <begin position="482"/>
        <end position="486"/>
    </location>
</feature>
<feature type="splice variant" id="VSP_002220" description="In isoform 2." evidence="19">
    <location>
        <begin position="489"/>
        <end position="1307"/>
    </location>
</feature>
<feature type="splice variant" id="VSP_024032" description="In isoform 5 and isoform 6." evidence="21">
    <location>
        <begin position="527"/>
        <end position="1307"/>
    </location>
</feature>
<feature type="splice variant" id="VSP_024033" description="In isoform 7." evidence="22">
    <location>
        <begin position="756"/>
        <end position="1307"/>
    </location>
</feature>
<feature type="mutagenesis site" description="Abolishes methyltransferase activity." evidence="10">
    <original>C</original>
    <variation>T</variation>
    <location>
        <position position="798"/>
    </location>
</feature>
<feature type="mutagenesis site" description="Decreases endogenous retroviruses silencing and cell growth." evidence="13">
    <original>C</original>
    <variation>A</variation>
    <location>
        <position position="1242"/>
    </location>
</feature>
<feature type="mutagenesis site" description="Abolishes methyltransferase activity." evidence="10">
    <original>C</original>
    <variation>T</variation>
    <location>
        <position position="1242"/>
    </location>
</feature>
<feature type="sequence conflict" description="In Ref. 5; BAC40439." evidence="25" ref="5">
    <original>I</original>
    <variation>M</variation>
    <location>
        <position position="463"/>
    </location>
</feature>
<feature type="sequence conflict" description="In Ref. 4; BAC65480." evidence="25" ref="4">
    <original>P</original>
    <variation>S</variation>
    <location>
        <position position="1092"/>
    </location>
</feature>